<organism>
    <name type="scientific">Saccharomyces cerevisiae (strain ATCC 204508 / S288c)</name>
    <name type="common">Baker's yeast</name>
    <dbReference type="NCBI Taxonomy" id="559292"/>
    <lineage>
        <taxon>Eukaryota</taxon>
        <taxon>Fungi</taxon>
        <taxon>Dikarya</taxon>
        <taxon>Ascomycota</taxon>
        <taxon>Saccharomycotina</taxon>
        <taxon>Saccharomycetes</taxon>
        <taxon>Saccharomycetales</taxon>
        <taxon>Saccharomycetaceae</taxon>
        <taxon>Saccharomyces</taxon>
    </lineage>
</organism>
<feature type="chain" id="PRO_0000409751" description="Y' element ATP-dependent helicase protein 1 copy 7">
    <location>
        <begin position="1"/>
        <end position="1859"/>
    </location>
</feature>
<feature type="domain" description="Helicase ATP-binding" evidence="1">
    <location>
        <begin position="861"/>
        <end position="1038"/>
    </location>
</feature>
<feature type="domain" description="Helicase C-terminal" evidence="2">
    <location>
        <begin position="1095"/>
        <end position="1244"/>
    </location>
</feature>
<feature type="region of interest" description="Disordered" evidence="3">
    <location>
        <begin position="1318"/>
        <end position="1485"/>
    </location>
</feature>
<feature type="compositionally biased region" description="Low complexity" evidence="3">
    <location>
        <begin position="1318"/>
        <end position="1461"/>
    </location>
</feature>
<feature type="compositionally biased region" description="Basic and acidic residues" evidence="3">
    <location>
        <begin position="1462"/>
        <end position="1485"/>
    </location>
</feature>
<feature type="binding site" evidence="1">
    <location>
        <begin position="874"/>
        <end position="881"/>
    </location>
    <ligand>
        <name>ATP</name>
        <dbReference type="ChEBI" id="CHEBI:30616"/>
    </ligand>
</feature>
<evidence type="ECO:0000255" key="1">
    <source>
        <dbReference type="PROSITE-ProRule" id="PRU00541"/>
    </source>
</evidence>
<evidence type="ECO:0000255" key="2">
    <source>
        <dbReference type="PROSITE-ProRule" id="PRU00542"/>
    </source>
</evidence>
<evidence type="ECO:0000256" key="3">
    <source>
        <dbReference type="SAM" id="MobiDB-lite"/>
    </source>
</evidence>
<evidence type="ECO:0000305" key="4"/>
<evidence type="ECO:0000305" key="5">
    <source>
    </source>
</evidence>
<dbReference type="EC" id="5.6.2.-" evidence="5"/>
<dbReference type="EMBL" id="Z73521">
    <property type="protein sequence ID" value="CAA97870.1"/>
    <property type="molecule type" value="Genomic_DNA"/>
</dbReference>
<dbReference type="EMBL" id="Z73638">
    <property type="protein sequence ID" value="CAA98020.1"/>
    <property type="molecule type" value="Genomic_DNA"/>
</dbReference>
<dbReference type="EMBL" id="BK006949">
    <property type="protein sequence ID" value="DAA11155.1"/>
    <property type="molecule type" value="Genomic_DNA"/>
</dbReference>
<dbReference type="PIR" id="S64633">
    <property type="entry name" value="S64633"/>
</dbReference>
<dbReference type="RefSeq" id="NP_015040.1">
    <property type="nucleotide sequence ID" value="NM_001184097.1"/>
</dbReference>
<dbReference type="BioGRID" id="33543">
    <property type="interactions" value="8"/>
</dbReference>
<dbReference type="BioGRID" id="35932">
    <property type="interactions" value="8"/>
</dbReference>
<dbReference type="FunCoup" id="P0CX15">
    <property type="interactions" value="75"/>
</dbReference>
<dbReference type="IntAct" id="P0CX15">
    <property type="interactions" value="7"/>
</dbReference>
<dbReference type="MINT" id="P0CX15"/>
<dbReference type="EnsemblFungi" id="YGR296W_mRNA">
    <property type="protein sequence ID" value="YGR296W"/>
    <property type="gene ID" value="YGR296W"/>
</dbReference>
<dbReference type="EnsemblFungi" id="YPL283C_mRNA">
    <property type="protein sequence ID" value="YPL283C"/>
    <property type="gene ID" value="YPL283C"/>
</dbReference>
<dbReference type="GeneID" id="855846"/>
<dbReference type="KEGG" id="sce:YGR296W"/>
<dbReference type="KEGG" id="sce:YPL283C"/>
<dbReference type="AGR" id="SGD:S000006204"/>
<dbReference type="SGD" id="S000006204">
    <property type="gene designation" value="YRF1-7"/>
</dbReference>
<dbReference type="VEuPathDB" id="FungiDB:YGR296W"/>
<dbReference type="VEuPathDB" id="FungiDB:YPL283C"/>
<dbReference type="GeneTree" id="ENSGT00940000153173"/>
<dbReference type="HOGENOM" id="CLU_003044_2_0_1"/>
<dbReference type="InParanoid" id="P0CX15"/>
<dbReference type="OMA" id="YATFRHY"/>
<dbReference type="OrthoDB" id="4070089at2759"/>
<dbReference type="BioCyc" id="YEAST:G3O-34163-MONOMER"/>
<dbReference type="Reactome" id="R-SCE-5689880">
    <property type="pathway name" value="Ub-specific processing proteases"/>
</dbReference>
<dbReference type="Reactome" id="R-SCE-936440">
    <property type="pathway name" value="Negative regulators of DDX58/IFIH1 signaling"/>
</dbReference>
<dbReference type="PRO" id="PR:P0CX15"/>
<dbReference type="Proteomes" id="UP000002311">
    <property type="component" value="Chromosome XVI"/>
</dbReference>
<dbReference type="RNAct" id="P0CX15">
    <property type="molecule type" value="protein"/>
</dbReference>
<dbReference type="ExpressionAtlas" id="P0CX15">
    <property type="expression patterns" value="differential"/>
</dbReference>
<dbReference type="GO" id="GO:0005737">
    <property type="term" value="C:cytoplasm"/>
    <property type="evidence" value="ECO:0000318"/>
    <property type="project" value="GO_Central"/>
</dbReference>
<dbReference type="GO" id="GO:0005739">
    <property type="term" value="C:mitochondrion"/>
    <property type="evidence" value="ECO:0007005"/>
    <property type="project" value="SGD"/>
</dbReference>
<dbReference type="GO" id="GO:0005524">
    <property type="term" value="F:ATP binding"/>
    <property type="evidence" value="ECO:0007669"/>
    <property type="project" value="UniProtKB-KW"/>
</dbReference>
<dbReference type="GO" id="GO:0016887">
    <property type="term" value="F:ATP hydrolysis activity"/>
    <property type="evidence" value="ECO:0007669"/>
    <property type="project" value="RHEA"/>
</dbReference>
<dbReference type="GO" id="GO:0003678">
    <property type="term" value="F:DNA helicase activity"/>
    <property type="evidence" value="ECO:0000250"/>
    <property type="project" value="SGD"/>
</dbReference>
<dbReference type="GO" id="GO:0003676">
    <property type="term" value="F:nucleic acid binding"/>
    <property type="evidence" value="ECO:0007669"/>
    <property type="project" value="InterPro"/>
</dbReference>
<dbReference type="GO" id="GO:0000722">
    <property type="term" value="P:telomere maintenance via recombination"/>
    <property type="evidence" value="ECO:0000316"/>
    <property type="project" value="SGD"/>
</dbReference>
<dbReference type="FunFam" id="3.40.50.300:FF:001914">
    <property type="entry name" value="YML133C-like protein"/>
    <property type="match status" value="1"/>
</dbReference>
<dbReference type="FunFam" id="3.40.50.300:FF:002410">
    <property type="entry name" value="YML133C-like protein"/>
    <property type="match status" value="1"/>
</dbReference>
<dbReference type="Gene3D" id="3.40.50.300">
    <property type="entry name" value="P-loop containing nucleotide triphosphate hydrolases"/>
    <property type="match status" value="1"/>
</dbReference>
<dbReference type="InterPro" id="IPR011545">
    <property type="entry name" value="DEAD/DEAH_box_helicase_dom"/>
</dbReference>
<dbReference type="InterPro" id="IPR014001">
    <property type="entry name" value="Helicase_ATP-bd"/>
</dbReference>
<dbReference type="InterPro" id="IPR001650">
    <property type="entry name" value="Helicase_C-like"/>
</dbReference>
<dbReference type="InterPro" id="IPR037240">
    <property type="entry name" value="ORC1-binding_dom"/>
</dbReference>
<dbReference type="InterPro" id="IPR027417">
    <property type="entry name" value="P-loop_NTPase"/>
</dbReference>
<dbReference type="InterPro" id="IPR021646">
    <property type="entry name" value="Sir1_ORC-binding"/>
</dbReference>
<dbReference type="InterPro" id="IPR050978">
    <property type="entry name" value="Y'_ATP-dependent_helicase"/>
</dbReference>
<dbReference type="PANTHER" id="PTHR31583">
    <property type="match status" value="1"/>
</dbReference>
<dbReference type="PANTHER" id="PTHR31583:SF2">
    <property type="match status" value="1"/>
</dbReference>
<dbReference type="Pfam" id="PF00270">
    <property type="entry name" value="DEAD"/>
    <property type="match status" value="1"/>
</dbReference>
<dbReference type="Pfam" id="PF00271">
    <property type="entry name" value="Helicase_C"/>
    <property type="match status" value="1"/>
</dbReference>
<dbReference type="Pfam" id="PF11603">
    <property type="entry name" value="Sir1"/>
    <property type="match status" value="1"/>
</dbReference>
<dbReference type="SMART" id="SM00487">
    <property type="entry name" value="DEXDc"/>
    <property type="match status" value="1"/>
</dbReference>
<dbReference type="SMART" id="SM00490">
    <property type="entry name" value="HELICc"/>
    <property type="match status" value="1"/>
</dbReference>
<dbReference type="SUPFAM" id="SSF144005">
    <property type="entry name" value="ORC1-binding domain"/>
    <property type="match status" value="1"/>
</dbReference>
<dbReference type="SUPFAM" id="SSF52540">
    <property type="entry name" value="P-loop containing nucleoside triphosphate hydrolases"/>
    <property type="match status" value="1"/>
</dbReference>
<dbReference type="PROSITE" id="PS51192">
    <property type="entry name" value="HELICASE_ATP_BIND_1"/>
    <property type="match status" value="1"/>
</dbReference>
<dbReference type="PROSITE" id="PS51194">
    <property type="entry name" value="HELICASE_CTER"/>
    <property type="match status" value="1"/>
</dbReference>
<proteinExistence type="evidence at transcript level"/>
<gene>
    <name type="primary">YRF1-7</name>
    <name type="ordered locus">YPL283C</name>
</gene>
<keyword id="KW-0067">ATP-binding</keyword>
<keyword id="KW-0347">Helicase</keyword>
<keyword id="KW-0378">Hydrolase</keyword>
<keyword id="KW-0413">Isomerase</keyword>
<keyword id="KW-0547">Nucleotide-binding</keyword>
<keyword id="KW-1185">Reference proteome</keyword>
<keyword id="KW-0677">Repeat</keyword>
<name>YRF17_YEAST</name>
<sequence length="1859" mass="211115">MEIENEQICTCIAQILHLLNSLIITFLDDDKTETGQSFVYIDGFLVKKHNNQHTIVNFETYKNKMKVSDRRKFEKANFDEFESALNNKNDLVHCPSITLFESIPTEVRSFYEDEKSGLIKVVKFRTGAMDRKRSFEKIVVSVMVGKNVQKFLTFVEDEPDFQGGPIPSKYLIPKKINLMVYTLFQVHTLKFNRKDYDTLSLFYLNRGYYNELSFRVLERCYEIASARPNDSSTMRTFTDFVSGTPIVRGLQKSTIRKYGYNLAPYMFLLLHVDELSIFSAYQASLPGEKKVDTERLKRDLCPRKPTEIKYFSQICNDMMNKKDRLGDILHIILRACALNFGAGPRGGAGDEEDRSITNEEPIIPSVDEHGLKVCKLRSPNTPRRLRKTLDAVKALLVSSCACTARDLDIFDDNNGVAMWKWIKILYHEVAQETALKDSYRITLVPSSDGVSVCGKLFNREYVRGFYFACKAQFDNLWEELNDCFYMPTVVDIASLILRNREVLFREPKRGIDEYLENDSFLQMIPVKYREIVLPKLRRDTNKMTAALKNKVTVAIDELTVPLMWMIHFAVGYPYRYPELQLLAFAGPQRNVYVDDTTRRIQLYTDYNKNGSSEPRLKTLDGLTSDYVFYFVTVLRQMQICALGNSYDAFNHDPWMDVVGFEDPDQVTNRDISRIVLYSYMFLNTAKGCLVEYATFRQYMRELPKNAPQKLNFREMRQGLIALGRHCVGSRFETDLYESATSELMANHSVQTGRNIYGVDSFSLTSVSGTTATLLQERASERWIQWLGLESDYHCSFSSTRNAEDVVAGEAASSDHHQKISRVTRKRPREPKSTNDILVAGQKLFGSSFEFRDLHQLRLCHEIYMADTPSVAVQAPPGYGKTELFHLPLIALASKGDVKYVSFLFVPYTVLLANCMIRLSRCGCLNVAPVRNFIEEGCDGVTDLYVGIYDDLASTNFTDRIAAWENIVECTFRTNNVKLGYLIVDEFHNFETEVYRQSQFGGITNLDFDAFEKAIFLSGTAPEAVADAALQRIGLTGLAKKSMDINELKRSEDLSRGLSSYPTRMFNLIKEKSEVPLGHVHKIWKKVESQPEEALKLLLALFEIEPESKAIVVASTTNEVEELACSWRKYFRVVWIHGKLGAAEKVSRTKEFVTDGSMRVLIGTKLVTEGIDIKQLMMVIMLDNRLNIIELIQGVGRLRDGGLCYLLSRKNSWAARNRKGELPPIKEGCITEQVREFYGLESKKGKKGQHVGCCGSRTDLSADTVELIERMDRLAEKQATASMSIVALPSSFQESNSSDRCRKYCSSDEDSDTCIHGSANASTNATTNSSTNATTTASTNVRTSATTTASINVRTSATTTESTNSSTNATTTASTNVRTSATTTASINVRTSATTTESTNSNTSATTTESTDSNTSATTTESTDSNTSATTTASTNSSTNATTTASTNSSTNATTTESTNASAKEDANKDGNAEDNRFHPVTDINKESYKRKGSQMVLLERKKLKAQFPNTSENMNVLQFLGFRSDEIKHLFLYGIDVYFCPEGVFTQYGLCKGCQKMFELCVCWAGQKVSYRRMAWEALAVERMLRNDEEYKEYLEDIEPYHGDPVGYLKYFSVKRGEIYSQIQRNYAWYLAITRRRETISVLDSTRGKQGSQVFRMSGRQIKELYYKVWSNLRESKTEVLQYFLNWDEKKCREEWEAKDDTVFVEALEKVGVFQRLRSMTSAGLQGPQYVKLQFSRHHRQLRSRYELSLGMHLRDQLALGVTPSKVPHWTAFLSMLIGLFCNKTFRQKLEYLLEQISEVWLLPHWLDLANVEVLAADNTRVPLYMLMVAVHKELDSDDVPDGRFDILLCRDSSREVGE</sequence>
<reference key="1">
    <citation type="journal article" date="1997" name="Nature">
        <title>The nucleotide sequence of Saccharomyces cerevisiae chromosome XVI.</title>
        <authorList>
            <person name="Bussey H."/>
            <person name="Storms R.K."/>
            <person name="Ahmed A."/>
            <person name="Albermann K."/>
            <person name="Allen E."/>
            <person name="Ansorge W."/>
            <person name="Araujo R."/>
            <person name="Aparicio A."/>
            <person name="Barrell B.G."/>
            <person name="Badcock K."/>
            <person name="Benes V."/>
            <person name="Botstein D."/>
            <person name="Bowman S."/>
            <person name="Brueckner M."/>
            <person name="Carpenter J."/>
            <person name="Cherry J.M."/>
            <person name="Chung E."/>
            <person name="Churcher C.M."/>
            <person name="Coster F."/>
            <person name="Davis K."/>
            <person name="Davis R.W."/>
            <person name="Dietrich F.S."/>
            <person name="Delius H."/>
            <person name="DiPaolo T."/>
            <person name="Dubois E."/>
            <person name="Duesterhoeft A."/>
            <person name="Duncan M."/>
            <person name="Floeth M."/>
            <person name="Fortin N."/>
            <person name="Friesen J.D."/>
            <person name="Fritz C."/>
            <person name="Goffeau A."/>
            <person name="Hall J."/>
            <person name="Hebling U."/>
            <person name="Heumann K."/>
            <person name="Hilbert H."/>
            <person name="Hillier L.W."/>
            <person name="Hunicke-Smith S."/>
            <person name="Hyman R.W."/>
            <person name="Johnston M."/>
            <person name="Kalman S."/>
            <person name="Kleine K."/>
            <person name="Komp C."/>
            <person name="Kurdi O."/>
            <person name="Lashkari D."/>
            <person name="Lew H."/>
            <person name="Lin A."/>
            <person name="Lin D."/>
            <person name="Louis E.J."/>
            <person name="Marathe R."/>
            <person name="Messenguy F."/>
            <person name="Mewes H.-W."/>
            <person name="Mirtipati S."/>
            <person name="Moestl D."/>
            <person name="Mueller-Auer S."/>
            <person name="Namath A."/>
            <person name="Nentwich U."/>
            <person name="Oefner P."/>
            <person name="Pearson D."/>
            <person name="Petel F.X."/>
            <person name="Pohl T.M."/>
            <person name="Purnelle B."/>
            <person name="Rajandream M.A."/>
            <person name="Rechmann S."/>
            <person name="Rieger M."/>
            <person name="Riles L."/>
            <person name="Roberts D."/>
            <person name="Schaefer M."/>
            <person name="Scharfe M."/>
            <person name="Scherens B."/>
            <person name="Schramm S."/>
            <person name="Schroeder M."/>
            <person name="Sdicu A.-M."/>
            <person name="Tettelin H."/>
            <person name="Urrestarazu L.A."/>
            <person name="Ushinsky S."/>
            <person name="Vierendeels F."/>
            <person name="Vissers S."/>
            <person name="Voss H."/>
            <person name="Walsh S.V."/>
            <person name="Wambutt R."/>
            <person name="Wang Y."/>
            <person name="Wedler E."/>
            <person name="Wedler H."/>
            <person name="Winnett E."/>
            <person name="Zhong W.-W."/>
            <person name="Zollner A."/>
            <person name="Vo D.H."/>
            <person name="Hani J."/>
        </authorList>
    </citation>
    <scope>NUCLEOTIDE SEQUENCE [LARGE SCALE GENOMIC DNA]</scope>
    <source>
        <strain>ATCC 204508 / S288c</strain>
    </source>
</reference>
<reference key="2">
    <citation type="journal article" date="2014" name="G3 (Bethesda)">
        <title>The reference genome sequence of Saccharomyces cerevisiae: Then and now.</title>
        <authorList>
            <person name="Engel S.R."/>
            <person name="Dietrich F.S."/>
            <person name="Fisk D.G."/>
            <person name="Binkley G."/>
            <person name="Balakrishnan R."/>
            <person name="Costanzo M.C."/>
            <person name="Dwight S.S."/>
            <person name="Hitz B.C."/>
            <person name="Karra K."/>
            <person name="Nash R.S."/>
            <person name="Weng S."/>
            <person name="Wong E.D."/>
            <person name="Lloyd P."/>
            <person name="Skrzypek M.S."/>
            <person name="Miyasato S.R."/>
            <person name="Simison M."/>
            <person name="Cherry J.M."/>
        </authorList>
    </citation>
    <scope>GENOME REANNOTATION</scope>
    <source>
        <strain>ATCC 204508 / S288c</strain>
    </source>
</reference>
<reference key="3">
    <citation type="journal article" date="1998" name="J. Biol. Chem.">
        <title>Y'-Help1, a DNA helicase encoded by the yeast subtelomeric Y' element, is induced in survivors defective for telomerase.</title>
        <authorList>
            <person name="Yamada M."/>
            <person name="Hayatsu N."/>
            <person name="Matsuura A."/>
            <person name="Ishikawa F."/>
        </authorList>
    </citation>
    <scope>FUNCTION</scope>
    <scope>INDUCTION</scope>
</reference>
<comment type="function">
    <text evidence="5">Catalyzes DNA unwinding and is involved in telomerase-independent telomere maintenance.</text>
</comment>
<comment type="induction">
    <text evidence="5">Induced in absence of telomerase TLC1.</text>
</comment>
<comment type="similarity">
    <text evidence="4">Belongs to the helicase family. Yeast subtelomeric Y' repeat subfamily.</text>
</comment>
<protein>
    <recommendedName>
        <fullName>Y' element ATP-dependent helicase protein 1 copy 7</fullName>
        <ecNumber evidence="5">5.6.2.-</ecNumber>
    </recommendedName>
</protein>
<accession>P0CX15</accession>
<accession>D6VV70</accession>
<accession>P53345</accession>
<accession>Q9UQW1</accession>